<gene>
    <name evidence="1" type="primary">hemL</name>
    <name type="ordered locus">Cla_0579</name>
</gene>
<evidence type="ECO:0000255" key="1">
    <source>
        <dbReference type="HAMAP-Rule" id="MF_00375"/>
    </source>
</evidence>
<feature type="chain" id="PRO_0000382289" description="Glutamate-1-semialdehyde 2,1-aminomutase">
    <location>
        <begin position="1"/>
        <end position="425"/>
    </location>
</feature>
<feature type="modified residue" description="N6-(pyridoxal phosphate)lysine" evidence="1">
    <location>
        <position position="264"/>
    </location>
</feature>
<dbReference type="EC" id="5.4.3.8" evidence="1"/>
<dbReference type="EMBL" id="CP000932">
    <property type="protein sequence ID" value="ACM63913.1"/>
    <property type="molecule type" value="Genomic_DNA"/>
</dbReference>
<dbReference type="RefSeq" id="WP_012661296.1">
    <property type="nucleotide sequence ID" value="NC_012039.1"/>
</dbReference>
<dbReference type="SMR" id="B9KFS8"/>
<dbReference type="STRING" id="306263.Cla_0579"/>
<dbReference type="KEGG" id="cla:CLA_0579"/>
<dbReference type="PATRIC" id="fig|306263.5.peg.563"/>
<dbReference type="eggNOG" id="COG0001">
    <property type="taxonomic scope" value="Bacteria"/>
</dbReference>
<dbReference type="HOGENOM" id="CLU_016922_1_5_7"/>
<dbReference type="UniPathway" id="UPA00251">
    <property type="reaction ID" value="UER00317"/>
</dbReference>
<dbReference type="Proteomes" id="UP000007727">
    <property type="component" value="Chromosome"/>
</dbReference>
<dbReference type="GO" id="GO:0005737">
    <property type="term" value="C:cytoplasm"/>
    <property type="evidence" value="ECO:0007669"/>
    <property type="project" value="UniProtKB-SubCell"/>
</dbReference>
<dbReference type="GO" id="GO:0042286">
    <property type="term" value="F:glutamate-1-semialdehyde 2,1-aminomutase activity"/>
    <property type="evidence" value="ECO:0007669"/>
    <property type="project" value="UniProtKB-UniRule"/>
</dbReference>
<dbReference type="GO" id="GO:0030170">
    <property type="term" value="F:pyridoxal phosphate binding"/>
    <property type="evidence" value="ECO:0007669"/>
    <property type="project" value="InterPro"/>
</dbReference>
<dbReference type="GO" id="GO:0008483">
    <property type="term" value="F:transaminase activity"/>
    <property type="evidence" value="ECO:0007669"/>
    <property type="project" value="InterPro"/>
</dbReference>
<dbReference type="GO" id="GO:0006782">
    <property type="term" value="P:protoporphyrinogen IX biosynthetic process"/>
    <property type="evidence" value="ECO:0007669"/>
    <property type="project" value="UniProtKB-UniRule"/>
</dbReference>
<dbReference type="CDD" id="cd00610">
    <property type="entry name" value="OAT_like"/>
    <property type="match status" value="1"/>
</dbReference>
<dbReference type="FunFam" id="3.40.640.10:FF:000021">
    <property type="entry name" value="Glutamate-1-semialdehyde 2,1-aminomutase"/>
    <property type="match status" value="1"/>
</dbReference>
<dbReference type="Gene3D" id="3.90.1150.10">
    <property type="entry name" value="Aspartate Aminotransferase, domain 1"/>
    <property type="match status" value="1"/>
</dbReference>
<dbReference type="Gene3D" id="3.40.640.10">
    <property type="entry name" value="Type I PLP-dependent aspartate aminotransferase-like (Major domain)"/>
    <property type="match status" value="1"/>
</dbReference>
<dbReference type="HAMAP" id="MF_00375">
    <property type="entry name" value="HemL_aminotrans_3"/>
    <property type="match status" value="1"/>
</dbReference>
<dbReference type="InterPro" id="IPR004639">
    <property type="entry name" value="4pyrrol_synth_GluAld_NH2Trfase"/>
</dbReference>
<dbReference type="InterPro" id="IPR005814">
    <property type="entry name" value="Aminotrans_3"/>
</dbReference>
<dbReference type="InterPro" id="IPR049704">
    <property type="entry name" value="Aminotrans_3_PPA_site"/>
</dbReference>
<dbReference type="InterPro" id="IPR015424">
    <property type="entry name" value="PyrdxlP-dep_Trfase"/>
</dbReference>
<dbReference type="InterPro" id="IPR015421">
    <property type="entry name" value="PyrdxlP-dep_Trfase_major"/>
</dbReference>
<dbReference type="InterPro" id="IPR015422">
    <property type="entry name" value="PyrdxlP-dep_Trfase_small"/>
</dbReference>
<dbReference type="NCBIfam" id="TIGR00713">
    <property type="entry name" value="hemL"/>
    <property type="match status" value="1"/>
</dbReference>
<dbReference type="NCBIfam" id="NF000818">
    <property type="entry name" value="PRK00062.1"/>
    <property type="match status" value="1"/>
</dbReference>
<dbReference type="PANTHER" id="PTHR43713">
    <property type="entry name" value="GLUTAMATE-1-SEMIALDEHYDE 2,1-AMINOMUTASE"/>
    <property type="match status" value="1"/>
</dbReference>
<dbReference type="PANTHER" id="PTHR43713:SF3">
    <property type="entry name" value="GLUTAMATE-1-SEMIALDEHYDE 2,1-AMINOMUTASE 1, CHLOROPLASTIC-RELATED"/>
    <property type="match status" value="1"/>
</dbReference>
<dbReference type="Pfam" id="PF00202">
    <property type="entry name" value="Aminotran_3"/>
    <property type="match status" value="1"/>
</dbReference>
<dbReference type="SUPFAM" id="SSF53383">
    <property type="entry name" value="PLP-dependent transferases"/>
    <property type="match status" value="1"/>
</dbReference>
<dbReference type="PROSITE" id="PS00600">
    <property type="entry name" value="AA_TRANSFER_CLASS_3"/>
    <property type="match status" value="1"/>
</dbReference>
<sequence>MKNNKKAFEEACEYIAGGVDSPVRAFASVGSNPLFIKKGKGAYISDIEDNTYIDYVQSWGPLLFGHCDEDVEKACKKALEHGSSFGAPTLAETKLAKFILQDWPHLDKIRFVSSGTEATMSAIRLARGFSKKDKIIKFEGCYHGHSDSLLVSAGSGAATFNTPSSLGVLEDVAKNTLVAIYNDIDSVKNLVEKHSDIACIIIEPIAGNMGLVPAKKEFLQELQALCKKHQILLIFDEVMSGFRASYLGSYGIYNIQADIVTFGKVIGGGMPAAAFAARAEIMDLLSPLGGVYQAGTLSGNPLAMASGYASLKKARNYEGLYEKLEKLGKRLTQGLKEAANDCKIPLQVNCVGSMFGFFFCENPVNNYQDALKSDTKLFAKFHAQMLSKGIYLAPSQFETGFICESMDKKIIEKTIQAAQESFKTL</sequence>
<protein>
    <recommendedName>
        <fullName evidence="1">Glutamate-1-semialdehyde 2,1-aminomutase</fullName>
        <shortName evidence="1">GSA</shortName>
        <ecNumber evidence="1">5.4.3.8</ecNumber>
    </recommendedName>
    <alternativeName>
        <fullName evidence="1">Glutamate-1-semialdehyde aminotransferase</fullName>
        <shortName evidence="1">GSA-AT</shortName>
    </alternativeName>
</protein>
<keyword id="KW-0963">Cytoplasm</keyword>
<keyword id="KW-0413">Isomerase</keyword>
<keyword id="KW-0627">Porphyrin biosynthesis</keyword>
<keyword id="KW-0663">Pyridoxal phosphate</keyword>
<keyword id="KW-1185">Reference proteome</keyword>
<accession>B9KFS8</accession>
<proteinExistence type="inferred from homology"/>
<organism>
    <name type="scientific">Campylobacter lari (strain RM2100 / D67 / ATCC BAA-1060)</name>
    <dbReference type="NCBI Taxonomy" id="306263"/>
    <lineage>
        <taxon>Bacteria</taxon>
        <taxon>Pseudomonadati</taxon>
        <taxon>Campylobacterota</taxon>
        <taxon>Epsilonproteobacteria</taxon>
        <taxon>Campylobacterales</taxon>
        <taxon>Campylobacteraceae</taxon>
        <taxon>Campylobacter</taxon>
    </lineage>
</organism>
<reference key="1">
    <citation type="journal article" date="2008" name="Foodborne Pathog. Dis.">
        <title>The complete genome sequence and analysis of the human pathogen Campylobacter lari.</title>
        <authorList>
            <person name="Miller W.G."/>
            <person name="Wang G."/>
            <person name="Binnewies T.T."/>
            <person name="Parker C.T."/>
        </authorList>
    </citation>
    <scope>NUCLEOTIDE SEQUENCE [LARGE SCALE GENOMIC DNA]</scope>
    <source>
        <strain>RM2100 / D67 / ATCC BAA-1060</strain>
    </source>
</reference>
<name>GSA_CAMLR</name>
<comment type="catalytic activity">
    <reaction evidence="1">
        <text>(S)-4-amino-5-oxopentanoate = 5-aminolevulinate</text>
        <dbReference type="Rhea" id="RHEA:14265"/>
        <dbReference type="ChEBI" id="CHEBI:57501"/>
        <dbReference type="ChEBI" id="CHEBI:356416"/>
        <dbReference type="EC" id="5.4.3.8"/>
    </reaction>
</comment>
<comment type="cofactor">
    <cofactor evidence="1">
        <name>pyridoxal 5'-phosphate</name>
        <dbReference type="ChEBI" id="CHEBI:597326"/>
    </cofactor>
</comment>
<comment type="pathway">
    <text evidence="1">Porphyrin-containing compound metabolism; protoporphyrin-IX biosynthesis; 5-aminolevulinate from L-glutamyl-tRNA(Glu): step 2/2.</text>
</comment>
<comment type="subunit">
    <text evidence="1">Homodimer.</text>
</comment>
<comment type="subcellular location">
    <subcellularLocation>
        <location evidence="1">Cytoplasm</location>
    </subcellularLocation>
</comment>
<comment type="similarity">
    <text evidence="1">Belongs to the class-III pyridoxal-phosphate-dependent aminotransferase family. HemL subfamily.</text>
</comment>